<reference key="1">
    <citation type="journal article" date="2008" name="PLoS Genet.">
        <title>Genomic islands in the pathogenic filamentous fungus Aspergillus fumigatus.</title>
        <authorList>
            <person name="Fedorova N.D."/>
            <person name="Khaldi N."/>
            <person name="Joardar V.S."/>
            <person name="Maiti R."/>
            <person name="Amedeo P."/>
            <person name="Anderson M.J."/>
            <person name="Crabtree J."/>
            <person name="Silva J.C."/>
            <person name="Badger J.H."/>
            <person name="Albarraq A."/>
            <person name="Angiuoli S."/>
            <person name="Bussey H."/>
            <person name="Bowyer P."/>
            <person name="Cotty P.J."/>
            <person name="Dyer P.S."/>
            <person name="Egan A."/>
            <person name="Galens K."/>
            <person name="Fraser-Liggett C.M."/>
            <person name="Haas B.J."/>
            <person name="Inman J.M."/>
            <person name="Kent R."/>
            <person name="Lemieux S."/>
            <person name="Malavazi I."/>
            <person name="Orvis J."/>
            <person name="Roemer T."/>
            <person name="Ronning C.M."/>
            <person name="Sundaram J.P."/>
            <person name="Sutton G."/>
            <person name="Turner G."/>
            <person name="Venter J.C."/>
            <person name="White O.R."/>
            <person name="Whitty B.R."/>
            <person name="Youngman P."/>
            <person name="Wolfe K.H."/>
            <person name="Goldman G.H."/>
            <person name="Wortman J.R."/>
            <person name="Jiang B."/>
            <person name="Denning D.W."/>
            <person name="Nierman W.C."/>
        </authorList>
    </citation>
    <scope>NUCLEOTIDE SEQUENCE [LARGE SCALE GENOMIC DNA]</scope>
    <source>
        <strain>ATCC 1007 / CBS 513.65 / DSM 816 / NCTC 3887 / NRRL 1 / QM 1276 / 107</strain>
    </source>
</reference>
<feature type="chain" id="PRO_0000312933" description="Serine/threonine-protein kinase ssn3">
    <location>
        <begin position="1"/>
        <end position="426"/>
    </location>
</feature>
<feature type="domain" description="Protein kinase" evidence="2">
    <location>
        <begin position="41"/>
        <end position="368"/>
    </location>
</feature>
<feature type="region of interest" description="Disordered" evidence="4">
    <location>
        <begin position="390"/>
        <end position="426"/>
    </location>
</feature>
<feature type="active site" description="Proton acceptor" evidence="2 3">
    <location>
        <position position="173"/>
    </location>
</feature>
<feature type="binding site" evidence="2">
    <location>
        <begin position="47"/>
        <end position="55"/>
    </location>
    <ligand>
        <name>ATP</name>
        <dbReference type="ChEBI" id="CHEBI:30616"/>
    </ligand>
</feature>
<feature type="binding site" evidence="2">
    <location>
        <position position="71"/>
    </location>
    <ligand>
        <name>ATP</name>
        <dbReference type="ChEBI" id="CHEBI:30616"/>
    </ligand>
</feature>
<organism>
    <name type="scientific">Aspergillus clavatus (strain ATCC 1007 / CBS 513.65 / DSM 816 / NCTC 3887 / NRRL 1 / QM 1276 / 107)</name>
    <dbReference type="NCBI Taxonomy" id="344612"/>
    <lineage>
        <taxon>Eukaryota</taxon>
        <taxon>Fungi</taxon>
        <taxon>Dikarya</taxon>
        <taxon>Ascomycota</taxon>
        <taxon>Pezizomycotina</taxon>
        <taxon>Eurotiomycetes</taxon>
        <taxon>Eurotiomycetidae</taxon>
        <taxon>Eurotiales</taxon>
        <taxon>Aspergillaceae</taxon>
        <taxon>Aspergillus</taxon>
        <taxon>Aspergillus subgen. Fumigati</taxon>
    </lineage>
</organism>
<evidence type="ECO:0000250" key="1"/>
<evidence type="ECO:0000255" key="2">
    <source>
        <dbReference type="PROSITE-ProRule" id="PRU00159"/>
    </source>
</evidence>
<evidence type="ECO:0000255" key="3">
    <source>
        <dbReference type="PROSITE-ProRule" id="PRU10027"/>
    </source>
</evidence>
<evidence type="ECO:0000256" key="4">
    <source>
        <dbReference type="SAM" id="MobiDB-lite"/>
    </source>
</evidence>
<evidence type="ECO:0000305" key="5"/>
<protein>
    <recommendedName>
        <fullName>Serine/threonine-protein kinase ssn3</fullName>
        <ecNumber>2.7.11.22</ecNumber>
        <ecNumber>2.7.11.23</ecNumber>
    </recommendedName>
    <alternativeName>
        <fullName>Cyclin-dependent kinase 8</fullName>
    </alternativeName>
</protein>
<dbReference type="EC" id="2.7.11.22"/>
<dbReference type="EC" id="2.7.11.23"/>
<dbReference type="EMBL" id="DS027056">
    <property type="protein sequence ID" value="EAW09920.1"/>
    <property type="status" value="ALT_SEQ"/>
    <property type="molecule type" value="Genomic_DNA"/>
</dbReference>
<dbReference type="RefSeq" id="XP_001271346.1">
    <property type="nucleotide sequence ID" value="XM_001271345.1"/>
</dbReference>
<dbReference type="SMR" id="A1CL96"/>
<dbReference type="STRING" id="344612.A1CL96"/>
<dbReference type="EnsemblFungi" id="EAW09920">
    <property type="protein sequence ID" value="EAW09920"/>
    <property type="gene ID" value="ACLA_041380"/>
</dbReference>
<dbReference type="GeneID" id="4702929"/>
<dbReference type="KEGG" id="act:ACLA_041380"/>
<dbReference type="eggNOG" id="KOG0666">
    <property type="taxonomic scope" value="Eukaryota"/>
</dbReference>
<dbReference type="OrthoDB" id="6284126at2759"/>
<dbReference type="Proteomes" id="UP000006701">
    <property type="component" value="Unassembled WGS sequence"/>
</dbReference>
<dbReference type="GO" id="GO:1990508">
    <property type="term" value="C:CKM complex"/>
    <property type="evidence" value="ECO:0007669"/>
    <property type="project" value="EnsemblFungi"/>
</dbReference>
<dbReference type="GO" id="GO:0016592">
    <property type="term" value="C:mediator complex"/>
    <property type="evidence" value="ECO:0007669"/>
    <property type="project" value="EnsemblFungi"/>
</dbReference>
<dbReference type="GO" id="GO:0005524">
    <property type="term" value="F:ATP binding"/>
    <property type="evidence" value="ECO:0007669"/>
    <property type="project" value="UniProtKB-KW"/>
</dbReference>
<dbReference type="GO" id="GO:0004693">
    <property type="term" value="F:cyclin-dependent protein serine/threonine kinase activity"/>
    <property type="evidence" value="ECO:0007669"/>
    <property type="project" value="UniProtKB-EC"/>
</dbReference>
<dbReference type="GO" id="GO:0046872">
    <property type="term" value="F:metal ion binding"/>
    <property type="evidence" value="ECO:0007669"/>
    <property type="project" value="UniProtKB-KW"/>
</dbReference>
<dbReference type="GO" id="GO:0106310">
    <property type="term" value="F:protein serine kinase activity"/>
    <property type="evidence" value="ECO:0007669"/>
    <property type="project" value="RHEA"/>
</dbReference>
<dbReference type="GO" id="GO:0008353">
    <property type="term" value="F:RNA polymerase II CTD heptapeptide repeat kinase activity"/>
    <property type="evidence" value="ECO:0007669"/>
    <property type="project" value="UniProtKB-EC"/>
</dbReference>
<dbReference type="GO" id="GO:0060258">
    <property type="term" value="P:negative regulation of filamentous growth"/>
    <property type="evidence" value="ECO:0007669"/>
    <property type="project" value="EnsemblFungi"/>
</dbReference>
<dbReference type="GO" id="GO:0000122">
    <property type="term" value="P:negative regulation of transcription by RNA polymerase II"/>
    <property type="evidence" value="ECO:0007669"/>
    <property type="project" value="EnsemblFungi"/>
</dbReference>
<dbReference type="GO" id="GO:0070481">
    <property type="term" value="P:nuclear-transcribed mRNA catabolic process, non-stop decay"/>
    <property type="evidence" value="ECO:0007669"/>
    <property type="project" value="EnsemblFungi"/>
</dbReference>
<dbReference type="GO" id="GO:0045944">
    <property type="term" value="P:positive regulation of transcription by RNA polymerase II"/>
    <property type="evidence" value="ECO:0007669"/>
    <property type="project" value="EnsemblFungi"/>
</dbReference>
<dbReference type="GO" id="GO:0031648">
    <property type="term" value="P:protein destabilization"/>
    <property type="evidence" value="ECO:0007669"/>
    <property type="project" value="EnsemblFungi"/>
</dbReference>
<dbReference type="CDD" id="cd07842">
    <property type="entry name" value="STKc_CDK8_like"/>
    <property type="match status" value="1"/>
</dbReference>
<dbReference type="FunFam" id="1.10.510.10:FF:000408">
    <property type="entry name" value="Serine/threonine-protein kinase SSN3"/>
    <property type="match status" value="1"/>
</dbReference>
<dbReference type="FunFam" id="3.30.200.20:FF:000426">
    <property type="entry name" value="Serine/threonine-protein kinase ssn3"/>
    <property type="match status" value="1"/>
</dbReference>
<dbReference type="Gene3D" id="3.30.200.20">
    <property type="entry name" value="Phosphorylase Kinase, domain 1"/>
    <property type="match status" value="1"/>
</dbReference>
<dbReference type="Gene3D" id="1.10.510.10">
    <property type="entry name" value="Transferase(Phosphotransferase) domain 1"/>
    <property type="match status" value="1"/>
</dbReference>
<dbReference type="InterPro" id="IPR050108">
    <property type="entry name" value="CDK"/>
</dbReference>
<dbReference type="InterPro" id="IPR011009">
    <property type="entry name" value="Kinase-like_dom_sf"/>
</dbReference>
<dbReference type="InterPro" id="IPR000719">
    <property type="entry name" value="Prot_kinase_dom"/>
</dbReference>
<dbReference type="InterPro" id="IPR008271">
    <property type="entry name" value="Ser/Thr_kinase_AS"/>
</dbReference>
<dbReference type="PANTHER" id="PTHR24056">
    <property type="entry name" value="CELL DIVISION PROTEIN KINASE"/>
    <property type="match status" value="1"/>
</dbReference>
<dbReference type="PANTHER" id="PTHR24056:SF495">
    <property type="entry name" value="CYCLIN-DEPENDENT KINASE 8-RELATED"/>
    <property type="match status" value="1"/>
</dbReference>
<dbReference type="Pfam" id="PF00069">
    <property type="entry name" value="Pkinase"/>
    <property type="match status" value="1"/>
</dbReference>
<dbReference type="SMART" id="SM00220">
    <property type="entry name" value="S_TKc"/>
    <property type="match status" value="1"/>
</dbReference>
<dbReference type="SUPFAM" id="SSF56112">
    <property type="entry name" value="Protein kinase-like (PK-like)"/>
    <property type="match status" value="1"/>
</dbReference>
<dbReference type="PROSITE" id="PS50011">
    <property type="entry name" value="PROTEIN_KINASE_DOM"/>
    <property type="match status" value="1"/>
</dbReference>
<dbReference type="PROSITE" id="PS00108">
    <property type="entry name" value="PROTEIN_KINASE_ST"/>
    <property type="match status" value="1"/>
</dbReference>
<accession>A1CL96</accession>
<keyword id="KW-0010">Activator</keyword>
<keyword id="KW-0067">ATP-binding</keyword>
<keyword id="KW-0418">Kinase</keyword>
<keyword id="KW-0460">Magnesium</keyword>
<keyword id="KW-0479">Metal-binding</keyword>
<keyword id="KW-0547">Nucleotide-binding</keyword>
<keyword id="KW-0539">Nucleus</keyword>
<keyword id="KW-1185">Reference proteome</keyword>
<keyword id="KW-0678">Repressor</keyword>
<keyword id="KW-0723">Serine/threonine-protein kinase</keyword>
<keyword id="KW-0804">Transcription</keyword>
<keyword id="KW-0805">Transcription regulation</keyword>
<keyword id="KW-0808">Transferase</keyword>
<comment type="function">
    <text evidence="1">Component of the srb8-11 complex. The srb8-11 complex is a regulatory module of the Mediator complex which is itself involved in regulation of basal and activated RNA polymerase II-dependent transcription. The srb8-11 complex may be involved in the transcriptional repression of a subset of genes regulated by Mediator. It may inhibit the association of the Mediator complex with RNA polymerase II to form the holoenzyme complex. The srb8-11 complex phosphorylates the C-terminal domain (CTD) of the largest subunit of RNA polymerase II (By similarity).</text>
</comment>
<comment type="catalytic activity">
    <reaction>
        <text>L-seryl-[protein] + ATP = O-phospho-L-seryl-[protein] + ADP + H(+)</text>
        <dbReference type="Rhea" id="RHEA:17989"/>
        <dbReference type="Rhea" id="RHEA-COMP:9863"/>
        <dbReference type="Rhea" id="RHEA-COMP:11604"/>
        <dbReference type="ChEBI" id="CHEBI:15378"/>
        <dbReference type="ChEBI" id="CHEBI:29999"/>
        <dbReference type="ChEBI" id="CHEBI:30616"/>
        <dbReference type="ChEBI" id="CHEBI:83421"/>
        <dbReference type="ChEBI" id="CHEBI:456216"/>
        <dbReference type="EC" id="2.7.11.22"/>
    </reaction>
</comment>
<comment type="catalytic activity">
    <reaction>
        <text>L-threonyl-[protein] + ATP = O-phospho-L-threonyl-[protein] + ADP + H(+)</text>
        <dbReference type="Rhea" id="RHEA:46608"/>
        <dbReference type="Rhea" id="RHEA-COMP:11060"/>
        <dbReference type="Rhea" id="RHEA-COMP:11605"/>
        <dbReference type="ChEBI" id="CHEBI:15378"/>
        <dbReference type="ChEBI" id="CHEBI:30013"/>
        <dbReference type="ChEBI" id="CHEBI:30616"/>
        <dbReference type="ChEBI" id="CHEBI:61977"/>
        <dbReference type="ChEBI" id="CHEBI:456216"/>
        <dbReference type="EC" id="2.7.11.22"/>
    </reaction>
</comment>
<comment type="catalytic activity">
    <reaction>
        <text>[DNA-directed RNA polymerase] + ATP = phospho-[DNA-directed RNA polymerase] + ADP + H(+)</text>
        <dbReference type="Rhea" id="RHEA:10216"/>
        <dbReference type="Rhea" id="RHEA-COMP:11321"/>
        <dbReference type="Rhea" id="RHEA-COMP:11322"/>
        <dbReference type="ChEBI" id="CHEBI:15378"/>
        <dbReference type="ChEBI" id="CHEBI:30616"/>
        <dbReference type="ChEBI" id="CHEBI:43176"/>
        <dbReference type="ChEBI" id="CHEBI:68546"/>
        <dbReference type="ChEBI" id="CHEBI:456216"/>
        <dbReference type="EC" id="2.7.11.23"/>
    </reaction>
</comment>
<comment type="cofactor">
    <cofactor evidence="1">
        <name>Mg(2+)</name>
        <dbReference type="ChEBI" id="CHEBI:18420"/>
    </cofactor>
</comment>
<comment type="subunit">
    <text evidence="1">Component of the srb8-11 complex, a regulatory module of the Mediator complex.</text>
</comment>
<comment type="subcellular location">
    <subcellularLocation>
        <location evidence="5">Nucleus</location>
    </subcellularLocation>
</comment>
<comment type="similarity">
    <text evidence="5">Belongs to the protein kinase superfamily. CMGC Ser/Thr protein kinase family. CDC2/CDKX subfamily.</text>
</comment>
<comment type="sequence caution" evidence="5">
    <conflict type="erroneous gene model prediction">
        <sequence resource="EMBL-CDS" id="EAW09920"/>
    </conflict>
</comment>
<sequence length="426" mass="48035">MFGRNFPFFNSIGGFYPRDSLDPRKPSGTGYTSKVRVRDKYHIVGFISSGTYGRVYKAIGKDGRKGEFAIKKFKPDKEGEIIQYTGLSQSAIREMSLCSELDHSNVVQLAEIILEDKCIFMVFEYTEHDLLQIIHHHTQPQRHAIPAPMIKSILFQLLNGLLYLHTNWVLHRDLKPANILVTSSGAVRIGDLGLARLFYKPLNSLYSGDKVVVTIWYRAPELLMGSRHYTPAVDLWAVGCIFAELLSLRPIFKGEEAKMDSKKTVPFQRNQMMKIVEIMGLPRKETWPGLVAMPEFSQLQSLAMARGHLNRQSNLEGWYQSCLKNNGYSPTSSAGTPGPEGFDLLSRLLEYDPLKRISAQEALEHPYFTTGTPITANCFAGYEGKYPHRRVTQDDNDIRSGSLPGTKRSGLPDDSLMGRAAKRLKE</sequence>
<proteinExistence type="inferred from homology"/>
<name>SSN3_ASPCL</name>
<gene>
    <name type="primary">ssn3</name>
    <name type="synonym">cdk8</name>
    <name type="ORF">ACLA_041380</name>
</gene>